<protein>
    <recommendedName>
        <fullName evidence="1">Serine hydroxymethyltransferase</fullName>
        <shortName evidence="1">SHMT</shortName>
        <shortName evidence="1">Serine methylase</shortName>
        <ecNumber evidence="1">2.1.2.1</ecNumber>
    </recommendedName>
</protein>
<sequence length="416" mass="45770">MAYFLEQTDSEIFELIFEEYKRQNEHLEMIASENYTFPSVMEAMGSILTNKYAEGYPNKRYYGGCEVVDKIESLAIERAKKLFNCQFANVQAHSGSQANNAVYHALLKPYDKILGMDLSCGGHLTHGAKVSLTGKHYQSFSYGVNLDGYIDYEEALKIAQSVKPEIIVCGFSAYPREIDFKKFREIADEVGALLLGDIAHVAGLVVTNEHAHPFPHCHVVSSTTHKTLRGPRGGIILTNDEEIAAKIDKAIFPGTQGGPLMHVIAAKAVGFKENLKPEFKAYAKLVKSNMQVLAKALKEKNHKLVSGGTSNHLLLMDFLDKPYSGKDADIALGNAGITVNKNTIPGETRSPFVTSGIRIGSAALSARGMGAKEFEIIGNKISDILNDINNVSLQLHVKEELKAMANQFPVYQQPIF</sequence>
<proteinExistence type="evidence at protein level"/>
<name>GLYA_HELPG</name>
<comment type="function">
    <text evidence="1">Catalyzes the reversible interconversion of serine and glycine with tetrahydrofolate (THF) serving as the one-carbon carrier. This reaction serves as the major source of one-carbon groups required for the biosynthesis of purines, thymidylate, methionine, and other important biomolecules. Also exhibits THF-independent aldolase activity toward beta-hydroxyamino acids, producing glycine and aldehydes, via a retro-aldol mechanism.</text>
</comment>
<comment type="catalytic activity">
    <reaction evidence="1">
        <text>(6R)-5,10-methylene-5,6,7,8-tetrahydrofolate + glycine + H2O = (6S)-5,6,7,8-tetrahydrofolate + L-serine</text>
        <dbReference type="Rhea" id="RHEA:15481"/>
        <dbReference type="ChEBI" id="CHEBI:15377"/>
        <dbReference type="ChEBI" id="CHEBI:15636"/>
        <dbReference type="ChEBI" id="CHEBI:33384"/>
        <dbReference type="ChEBI" id="CHEBI:57305"/>
        <dbReference type="ChEBI" id="CHEBI:57453"/>
        <dbReference type="EC" id="2.1.2.1"/>
    </reaction>
</comment>
<comment type="cofactor">
    <cofactor evidence="1">
        <name>pyridoxal 5'-phosphate</name>
        <dbReference type="ChEBI" id="CHEBI:597326"/>
    </cofactor>
</comment>
<comment type="pathway">
    <text evidence="1">One-carbon metabolism; tetrahydrofolate interconversion.</text>
</comment>
<comment type="pathway">
    <text evidence="1">Amino-acid biosynthesis; glycine biosynthesis; glycine from L-serine: step 1/1.</text>
</comment>
<comment type="subunit">
    <text evidence="1">Homodimer.</text>
</comment>
<comment type="subcellular location">
    <subcellularLocation>
        <location evidence="1">Cytoplasm</location>
    </subcellularLocation>
</comment>
<comment type="similarity">
    <text evidence="1">Belongs to the SHMT family.</text>
</comment>
<reference key="1">
    <citation type="journal article" date="2009" name="J. Bacteriol.">
        <title>The complete genome sequence of Helicobacter pylori strain G27.</title>
        <authorList>
            <person name="Baltrus D.A."/>
            <person name="Amieva M.R."/>
            <person name="Covacci A."/>
            <person name="Lowe T.M."/>
            <person name="Merrell D.S."/>
            <person name="Ottemann K.M."/>
            <person name="Stein M."/>
            <person name="Salama N.R."/>
            <person name="Guillemin K."/>
        </authorList>
    </citation>
    <scope>NUCLEOTIDE SEQUENCE [LARGE SCALE GENOMIC DNA]</scope>
    <source>
        <strain>G27</strain>
    </source>
</reference>
<accession>B5Z9V7</accession>
<evidence type="ECO:0000255" key="1">
    <source>
        <dbReference type="HAMAP-Rule" id="MF_00051"/>
    </source>
</evidence>
<evidence type="ECO:0007829" key="2">
    <source>
        <dbReference type="PDB" id="5VC2"/>
    </source>
</evidence>
<keyword id="KW-0002">3D-structure</keyword>
<keyword id="KW-0028">Amino-acid biosynthesis</keyword>
<keyword id="KW-0963">Cytoplasm</keyword>
<keyword id="KW-0554">One-carbon metabolism</keyword>
<keyword id="KW-0663">Pyridoxal phosphate</keyword>
<keyword id="KW-1185">Reference proteome</keyword>
<keyword id="KW-0808">Transferase</keyword>
<dbReference type="EC" id="2.1.2.1" evidence="1"/>
<dbReference type="EMBL" id="CP001173">
    <property type="protein sequence ID" value="ACI26937.1"/>
    <property type="molecule type" value="Genomic_DNA"/>
</dbReference>
<dbReference type="RefSeq" id="WP_000323136.1">
    <property type="nucleotide sequence ID" value="NC_011333.1"/>
</dbReference>
<dbReference type="PDB" id="5VC2">
    <property type="method" value="X-ray"/>
    <property type="resolution" value="1.90 A"/>
    <property type="chains" value="A/B=1-416"/>
</dbReference>
<dbReference type="PDBsum" id="5VC2"/>
<dbReference type="SMR" id="B5Z9V7"/>
<dbReference type="KEGG" id="hpg:HPG27_169"/>
<dbReference type="HOGENOM" id="CLU_022477_2_1_7"/>
<dbReference type="UniPathway" id="UPA00193"/>
<dbReference type="UniPathway" id="UPA00288">
    <property type="reaction ID" value="UER01023"/>
</dbReference>
<dbReference type="Proteomes" id="UP000001735">
    <property type="component" value="Chromosome"/>
</dbReference>
<dbReference type="GO" id="GO:0005829">
    <property type="term" value="C:cytosol"/>
    <property type="evidence" value="ECO:0007669"/>
    <property type="project" value="TreeGrafter"/>
</dbReference>
<dbReference type="GO" id="GO:0004372">
    <property type="term" value="F:glycine hydroxymethyltransferase activity"/>
    <property type="evidence" value="ECO:0007669"/>
    <property type="project" value="UniProtKB-UniRule"/>
</dbReference>
<dbReference type="GO" id="GO:0030170">
    <property type="term" value="F:pyridoxal phosphate binding"/>
    <property type="evidence" value="ECO:0007669"/>
    <property type="project" value="UniProtKB-UniRule"/>
</dbReference>
<dbReference type="GO" id="GO:0019264">
    <property type="term" value="P:glycine biosynthetic process from serine"/>
    <property type="evidence" value="ECO:0007669"/>
    <property type="project" value="UniProtKB-UniRule"/>
</dbReference>
<dbReference type="GO" id="GO:0035999">
    <property type="term" value="P:tetrahydrofolate interconversion"/>
    <property type="evidence" value="ECO:0007669"/>
    <property type="project" value="UniProtKB-UniRule"/>
</dbReference>
<dbReference type="CDD" id="cd00378">
    <property type="entry name" value="SHMT"/>
    <property type="match status" value="1"/>
</dbReference>
<dbReference type="FunFam" id="3.40.640.10:FF:000001">
    <property type="entry name" value="Serine hydroxymethyltransferase"/>
    <property type="match status" value="1"/>
</dbReference>
<dbReference type="Gene3D" id="3.90.1150.10">
    <property type="entry name" value="Aspartate Aminotransferase, domain 1"/>
    <property type="match status" value="1"/>
</dbReference>
<dbReference type="Gene3D" id="3.40.640.10">
    <property type="entry name" value="Type I PLP-dependent aspartate aminotransferase-like (Major domain)"/>
    <property type="match status" value="1"/>
</dbReference>
<dbReference type="HAMAP" id="MF_00051">
    <property type="entry name" value="SHMT"/>
    <property type="match status" value="1"/>
</dbReference>
<dbReference type="InterPro" id="IPR015424">
    <property type="entry name" value="PyrdxlP-dep_Trfase"/>
</dbReference>
<dbReference type="InterPro" id="IPR015421">
    <property type="entry name" value="PyrdxlP-dep_Trfase_major"/>
</dbReference>
<dbReference type="InterPro" id="IPR015422">
    <property type="entry name" value="PyrdxlP-dep_Trfase_small"/>
</dbReference>
<dbReference type="InterPro" id="IPR001085">
    <property type="entry name" value="Ser_HO-MeTrfase"/>
</dbReference>
<dbReference type="InterPro" id="IPR049943">
    <property type="entry name" value="Ser_HO-MeTrfase-like"/>
</dbReference>
<dbReference type="InterPro" id="IPR019798">
    <property type="entry name" value="Ser_HO-MeTrfase_PLP_BS"/>
</dbReference>
<dbReference type="InterPro" id="IPR039429">
    <property type="entry name" value="SHMT-like_dom"/>
</dbReference>
<dbReference type="NCBIfam" id="NF000586">
    <property type="entry name" value="PRK00011.1"/>
    <property type="match status" value="1"/>
</dbReference>
<dbReference type="PANTHER" id="PTHR11680">
    <property type="entry name" value="SERINE HYDROXYMETHYLTRANSFERASE"/>
    <property type="match status" value="1"/>
</dbReference>
<dbReference type="PANTHER" id="PTHR11680:SF50">
    <property type="entry name" value="SERINE HYDROXYMETHYLTRANSFERASE"/>
    <property type="match status" value="1"/>
</dbReference>
<dbReference type="Pfam" id="PF00464">
    <property type="entry name" value="SHMT"/>
    <property type="match status" value="1"/>
</dbReference>
<dbReference type="PIRSF" id="PIRSF000412">
    <property type="entry name" value="SHMT"/>
    <property type="match status" value="1"/>
</dbReference>
<dbReference type="SUPFAM" id="SSF53383">
    <property type="entry name" value="PLP-dependent transferases"/>
    <property type="match status" value="1"/>
</dbReference>
<dbReference type="PROSITE" id="PS00096">
    <property type="entry name" value="SHMT"/>
    <property type="match status" value="1"/>
</dbReference>
<gene>
    <name evidence="1" type="primary">glyA</name>
    <name type="ordered locus">HPG27_169</name>
</gene>
<organism>
    <name type="scientific">Helicobacter pylori (strain G27)</name>
    <dbReference type="NCBI Taxonomy" id="563041"/>
    <lineage>
        <taxon>Bacteria</taxon>
        <taxon>Pseudomonadati</taxon>
        <taxon>Campylobacterota</taxon>
        <taxon>Epsilonproteobacteria</taxon>
        <taxon>Campylobacterales</taxon>
        <taxon>Helicobacteraceae</taxon>
        <taxon>Helicobacter</taxon>
    </lineage>
</organism>
<feature type="chain" id="PRO_1000091546" description="Serine hydroxymethyltransferase">
    <location>
        <begin position="1"/>
        <end position="416"/>
    </location>
</feature>
<feature type="binding site" evidence="1">
    <location>
        <position position="118"/>
    </location>
    <ligand>
        <name>(6S)-5,6,7,8-tetrahydrofolate</name>
        <dbReference type="ChEBI" id="CHEBI:57453"/>
    </ligand>
</feature>
<feature type="binding site" evidence="1">
    <location>
        <begin position="122"/>
        <end position="124"/>
    </location>
    <ligand>
        <name>(6S)-5,6,7,8-tetrahydrofolate</name>
        <dbReference type="ChEBI" id="CHEBI:57453"/>
    </ligand>
</feature>
<feature type="binding site" evidence="1">
    <location>
        <position position="242"/>
    </location>
    <ligand>
        <name>(6S)-5,6,7,8-tetrahydrofolate</name>
        <dbReference type="ChEBI" id="CHEBI:57453"/>
    </ligand>
</feature>
<feature type="binding site" evidence="1">
    <location>
        <begin position="350"/>
        <end position="352"/>
    </location>
    <ligand>
        <name>(6S)-5,6,7,8-tetrahydrofolate</name>
        <dbReference type="ChEBI" id="CHEBI:57453"/>
    </ligand>
</feature>
<feature type="site" description="Plays an important role in substrate specificity" evidence="1">
    <location>
        <position position="225"/>
    </location>
</feature>
<feature type="modified residue" description="N6-(pyridoxal phosphate)lysine" evidence="1">
    <location>
        <position position="226"/>
    </location>
</feature>
<feature type="helix" evidence="2">
    <location>
        <begin position="4"/>
        <end position="8"/>
    </location>
</feature>
<feature type="helix" evidence="2">
    <location>
        <begin position="10"/>
        <end position="25"/>
    </location>
</feature>
<feature type="strand" evidence="2">
    <location>
        <begin position="26"/>
        <end position="28"/>
    </location>
</feature>
<feature type="helix" evidence="2">
    <location>
        <begin position="38"/>
        <end position="44"/>
    </location>
</feature>
<feature type="helix" evidence="2">
    <location>
        <begin position="47"/>
        <end position="50"/>
    </location>
</feature>
<feature type="helix" evidence="2">
    <location>
        <begin position="70"/>
        <end position="83"/>
    </location>
</feature>
<feature type="strand" evidence="2">
    <location>
        <begin position="86"/>
        <end position="89"/>
    </location>
</feature>
<feature type="helix" evidence="2">
    <location>
        <begin position="95"/>
        <end position="106"/>
    </location>
</feature>
<feature type="strand" evidence="2">
    <location>
        <begin position="112"/>
        <end position="116"/>
    </location>
</feature>
<feature type="strand" evidence="2">
    <location>
        <begin position="131"/>
        <end position="142"/>
    </location>
</feature>
<feature type="strand" evidence="2">
    <location>
        <begin position="148"/>
        <end position="150"/>
    </location>
</feature>
<feature type="helix" evidence="2">
    <location>
        <begin position="152"/>
        <end position="162"/>
    </location>
</feature>
<feature type="strand" evidence="2">
    <location>
        <begin position="165"/>
        <end position="169"/>
    </location>
</feature>
<feature type="helix" evidence="2">
    <location>
        <begin position="180"/>
        <end position="190"/>
    </location>
</feature>
<feature type="strand" evidence="2">
    <location>
        <begin position="193"/>
        <end position="197"/>
    </location>
</feature>
<feature type="turn" evidence="2">
    <location>
        <begin position="199"/>
        <end position="201"/>
    </location>
</feature>
<feature type="helix" evidence="2">
    <location>
        <begin position="202"/>
        <end position="205"/>
    </location>
</feature>
<feature type="turn" evidence="2">
    <location>
        <begin position="206"/>
        <end position="208"/>
    </location>
</feature>
<feature type="turn" evidence="2">
    <location>
        <begin position="214"/>
        <end position="216"/>
    </location>
</feature>
<feature type="strand" evidence="2">
    <location>
        <begin position="218"/>
        <end position="225"/>
    </location>
</feature>
<feature type="helix" evidence="2">
    <location>
        <begin position="226"/>
        <end position="228"/>
    </location>
</feature>
<feature type="strand" evidence="2">
    <location>
        <begin position="234"/>
        <end position="239"/>
    </location>
</feature>
<feature type="helix" evidence="2">
    <location>
        <begin position="241"/>
        <end position="250"/>
    </location>
</feature>
<feature type="helix" evidence="2">
    <location>
        <begin position="261"/>
        <end position="275"/>
    </location>
</feature>
<feature type="helix" evidence="2">
    <location>
        <begin position="277"/>
        <end position="299"/>
    </location>
</feature>
<feature type="helix" evidence="2">
    <location>
        <begin position="305"/>
        <end position="307"/>
    </location>
</feature>
<feature type="strand" evidence="2">
    <location>
        <begin position="310"/>
        <end position="317"/>
    </location>
</feature>
<feature type="strand" evidence="2">
    <location>
        <begin position="321"/>
        <end position="323"/>
    </location>
</feature>
<feature type="helix" evidence="2">
    <location>
        <begin position="325"/>
        <end position="334"/>
    </location>
</feature>
<feature type="strand" evidence="2">
    <location>
        <begin position="340"/>
        <end position="342"/>
    </location>
</feature>
<feature type="turn" evidence="2">
    <location>
        <begin position="351"/>
        <end position="353"/>
    </location>
</feature>
<feature type="strand" evidence="2">
    <location>
        <begin position="355"/>
        <end position="360"/>
    </location>
</feature>
<feature type="helix" evidence="2">
    <location>
        <begin position="362"/>
        <end position="366"/>
    </location>
</feature>
<feature type="helix" evidence="2">
    <location>
        <begin position="371"/>
        <end position="385"/>
    </location>
</feature>
<feature type="turn" evidence="2">
    <location>
        <begin position="386"/>
        <end position="389"/>
    </location>
</feature>
<feature type="helix" evidence="2">
    <location>
        <begin position="391"/>
        <end position="405"/>
    </location>
</feature>